<evidence type="ECO:0000255" key="1"/>
<evidence type="ECO:0000256" key="2">
    <source>
        <dbReference type="SAM" id="MobiDB-lite"/>
    </source>
</evidence>
<evidence type="ECO:0000269" key="3">
    <source>
    </source>
</evidence>
<evidence type="ECO:0000303" key="4">
    <source>
    </source>
</evidence>
<evidence type="ECO:0000305" key="5"/>
<evidence type="ECO:0000305" key="6">
    <source>
    </source>
</evidence>
<evidence type="ECO:0000312" key="7">
    <source>
        <dbReference type="EMBL" id="BAB98133.1"/>
    </source>
</evidence>
<reference key="1">
    <citation type="journal article" date="2003" name="Appl. Microbiol. Biotechnol.">
        <title>The Corynebacterium glutamicum genome: features and impacts on biotechnological processes.</title>
        <authorList>
            <person name="Ikeda M."/>
            <person name="Nakagawa S."/>
        </authorList>
    </citation>
    <scope>NUCLEOTIDE SEQUENCE [LARGE SCALE GENOMIC DNA]</scope>
    <source>
        <strain>ATCC 13032 / DSM 20300 / JCM 1318 / BCRC 11384 / CCUG 27702 / LMG 3730 / NBRC 12168 / NCIMB 10025 / NRRL B-2784 / 534</strain>
    </source>
</reference>
<reference key="2">
    <citation type="journal article" date="2016" name="J. Bacteriol.">
        <title>Impact of LytR-CpsA-Psr proteins on cell wall biosynthesis in Corynebacterium glutamicum.</title>
        <authorList>
            <person name="Baumgart M."/>
            <person name="Schubert K."/>
            <person name="Bramkamp M."/>
            <person name="Frunzke J."/>
        </authorList>
    </citation>
    <scope>FUNCTION</scope>
    <scope>SUBUNIT</scope>
    <scope>SUBCELLULAR LOCATION</scope>
    <scope>DOMAIN</scope>
    <scope>DISRUPTION PHENOTYPE</scope>
    <scope>MUTAGENESIS OF ASP-88; ARG-138 AND ARG-257</scope>
    <source>
        <strain>ATCC 13032 / DSM 20300 / JCM 1318 / BCRC 11384 / CCUG 27702 / LMG 3730 / NBRC 12168 / NCIMB 10025 / NRRL B-2784 / 534</strain>
    </source>
</reference>
<accession>Q8NSD6</accession>
<accession>Q6M740</accession>
<gene>
    <name evidence="4" type="primary">lcpA</name>
    <name evidence="7" type="ordered locus">Cgl0740</name>
</gene>
<organism>
    <name type="scientific">Corynebacterium glutamicum (strain ATCC 13032 / DSM 20300 / JCM 1318 / BCRC 11384 / CCUG 27702 / LMG 3730 / NBRC 12168 / NCIMB 10025 / NRRL B-2784 / 534)</name>
    <dbReference type="NCBI Taxonomy" id="196627"/>
    <lineage>
        <taxon>Bacteria</taxon>
        <taxon>Bacillati</taxon>
        <taxon>Actinomycetota</taxon>
        <taxon>Actinomycetes</taxon>
        <taxon>Mycobacteriales</taxon>
        <taxon>Corynebacteriaceae</taxon>
        <taxon>Corynebacterium</taxon>
    </lineage>
</organism>
<sequence length="518" mass="53916">MTEKYRPVRDIKPAPAAMQSTKQAGHPVFRSVVAFVSVLVLLVSGLGYLAVGKVDGVASGNLNLGGGRGIQDGNAADGATDILLVGSDSRSDAQGNTLTEEELAMLRAGDEENDNTDTIMVIRVPNDGSSATAVSIPRDTYIHDDDYGNMKINGVYGAYKDARRAELMEQGFTNESELETRAKDAGREGLIDAVSDLTGITVDHYAEVGLLGFVLLTDAVGGVEVCLNNAVDEPLSGANFPAGRQTLGGSDALSYVRQRHDLPRGDLDRIVRQQSYMASLVNQVLSSGTLTNPAKLSALADAVTRSVVIDEGWEIMSFATQLQNLAGGNVTFATIPVTSIDGTGDYGESVVTIDVNQVHAFFQEALGEAEPAPEDGSDDQSADQAPDLSEVEVHVLNASYVEGLANGIAAQLQELGYSIAETGNAAEGLYYESQILAAEEDSAKALAISEALGGLPIVANSSLDDNTVIVVSAGDYAGPTAEANAVTSSTVGQPGADVGEPIESPEFDAGGDGPRCVN</sequence>
<comment type="function">
    <text evidence="3">Involved in cell wall biosynthesis. May be responsible for the transfer of arabinogalactan onto peptidoglycan. In vitro, has pyrophosphatase activity.</text>
</comment>
<comment type="subunit">
    <text evidence="3">Forms homodimers and homotetramers.</text>
</comment>
<comment type="subcellular location">
    <subcellularLocation>
        <location evidence="3">Cell inner membrane</location>
        <topology evidence="1">Single-pass membrane protein</topology>
    </subcellularLocation>
    <text evidence="3">Localizes at regions of strong cell wall biosynthesis, such as the poles and the division plane.</text>
</comment>
<comment type="domain">
    <text evidence="3">Both the C-terminal LCP and LytR_C regions are essential for function. The N-terminal region is not strictly required.</text>
</comment>
<comment type="disruption phenotype">
    <text evidence="3">Essential, it cannot be deleted. Conditional silencing of the gene results in severe growth defects and drastic morphological changes. The lcpA-silencing strain contains significantly less mycolic acids and a reduced amount of arabinogalactan.</text>
</comment>
<comment type="similarity">
    <text evidence="5">Belongs to the LytR/CpsA/Psr (LCP) family.</text>
</comment>
<proteinExistence type="evidence at protein level"/>
<keyword id="KW-0997">Cell inner membrane</keyword>
<keyword id="KW-1003">Cell membrane</keyword>
<keyword id="KW-0961">Cell wall biogenesis/degradation</keyword>
<keyword id="KW-0472">Membrane</keyword>
<keyword id="KW-1185">Reference proteome</keyword>
<keyword id="KW-0812">Transmembrane</keyword>
<keyword id="KW-1133">Transmembrane helix</keyword>
<dbReference type="EMBL" id="BA000036">
    <property type="protein sequence ID" value="BAB98133.1"/>
    <property type="molecule type" value="Genomic_DNA"/>
</dbReference>
<dbReference type="RefSeq" id="NP_599970.1">
    <property type="nucleotide sequence ID" value="NC_003450.3"/>
</dbReference>
<dbReference type="RefSeq" id="WP_011013861.1">
    <property type="nucleotide sequence ID" value="NC_006958.1"/>
</dbReference>
<dbReference type="SMR" id="Q8NSD6"/>
<dbReference type="STRING" id="196627.cg0847"/>
<dbReference type="GeneID" id="1018737"/>
<dbReference type="KEGG" id="cgb:cg0847"/>
<dbReference type="KEGG" id="cgl:Cgl0740"/>
<dbReference type="PATRIC" id="fig|196627.13.peg.726"/>
<dbReference type="eggNOG" id="COG1316">
    <property type="taxonomic scope" value="Bacteria"/>
</dbReference>
<dbReference type="HOGENOM" id="CLU_016455_4_0_11"/>
<dbReference type="OrthoDB" id="9782542at2"/>
<dbReference type="BioCyc" id="CORYNE:G18NG-10302-MONOMER"/>
<dbReference type="Proteomes" id="UP000000582">
    <property type="component" value="Chromosome"/>
</dbReference>
<dbReference type="GO" id="GO:0005886">
    <property type="term" value="C:plasma membrane"/>
    <property type="evidence" value="ECO:0007669"/>
    <property type="project" value="UniProtKB-SubCell"/>
</dbReference>
<dbReference type="GO" id="GO:0071555">
    <property type="term" value="P:cell wall organization"/>
    <property type="evidence" value="ECO:0007669"/>
    <property type="project" value="UniProtKB-KW"/>
</dbReference>
<dbReference type="Gene3D" id="3.30.70.2390">
    <property type="match status" value="1"/>
</dbReference>
<dbReference type="Gene3D" id="3.40.630.190">
    <property type="entry name" value="LCP protein"/>
    <property type="match status" value="1"/>
</dbReference>
<dbReference type="InterPro" id="IPR027381">
    <property type="entry name" value="LytR/CpsA/Psr_C"/>
</dbReference>
<dbReference type="InterPro" id="IPR050922">
    <property type="entry name" value="LytR/CpsA/Psr_CW_biosynth"/>
</dbReference>
<dbReference type="InterPro" id="IPR004474">
    <property type="entry name" value="LytR_CpsA_psr"/>
</dbReference>
<dbReference type="NCBIfam" id="TIGR00350">
    <property type="entry name" value="lytR_cpsA_psr"/>
    <property type="match status" value="1"/>
</dbReference>
<dbReference type="PANTHER" id="PTHR33392">
    <property type="entry name" value="POLYISOPRENYL-TEICHOIC ACID--PEPTIDOGLYCAN TEICHOIC ACID TRANSFERASE TAGU"/>
    <property type="match status" value="1"/>
</dbReference>
<dbReference type="PANTHER" id="PTHR33392:SF6">
    <property type="entry name" value="POLYISOPRENYL-TEICHOIC ACID--PEPTIDOGLYCAN TEICHOIC ACID TRANSFERASE TAGU"/>
    <property type="match status" value="1"/>
</dbReference>
<dbReference type="Pfam" id="PF13399">
    <property type="entry name" value="LytR_C"/>
    <property type="match status" value="1"/>
</dbReference>
<dbReference type="Pfam" id="PF03816">
    <property type="entry name" value="LytR_cpsA_psr"/>
    <property type="match status" value="1"/>
</dbReference>
<name>LCPA_CORGL</name>
<feature type="chain" id="PRO_0000442346" description="Cell wall biosynthesis protein LcpA">
    <location>
        <begin position="1"/>
        <end position="518"/>
    </location>
</feature>
<feature type="topological domain" description="Cytoplasmic" evidence="6">
    <location>
        <begin position="1"/>
        <end position="31"/>
    </location>
</feature>
<feature type="transmembrane region" description="Helical" evidence="1">
    <location>
        <begin position="32"/>
        <end position="52"/>
    </location>
</feature>
<feature type="topological domain" description="Periplasmic" evidence="6">
    <location>
        <begin position="53"/>
        <end position="518"/>
    </location>
</feature>
<feature type="region of interest" description="Disordered" evidence="2">
    <location>
        <begin position="485"/>
        <end position="518"/>
    </location>
</feature>
<feature type="mutagenesis site" description="Does not complement the growth defect of the lcpA-silencing strain." evidence="3">
    <original>D</original>
    <variation>A</variation>
    <location>
        <position position="88"/>
    </location>
</feature>
<feature type="mutagenesis site" description="Does not complement the growth defect of the lcpA-silencing strain." evidence="3">
    <original>R</original>
    <variation>A</variation>
    <location>
        <position position="138"/>
    </location>
</feature>
<feature type="mutagenesis site" description="Does not complement the growth defect of the lcpA-silencing strain." evidence="3">
    <original>R</original>
    <variation>A</variation>
    <location>
        <position position="257"/>
    </location>
</feature>
<protein>
    <recommendedName>
        <fullName evidence="5">Cell wall biosynthesis protein LcpA</fullName>
    </recommendedName>
</protein>